<accession>Q5B4R9</accession>
<accession>C8V8I0</accession>
<name>SPP2_EMENI</name>
<organism>
    <name type="scientific">Emericella nidulans (strain FGSC A4 / ATCC 38163 / CBS 112.46 / NRRL 194 / M139)</name>
    <name type="common">Aspergillus nidulans</name>
    <dbReference type="NCBI Taxonomy" id="227321"/>
    <lineage>
        <taxon>Eukaryota</taxon>
        <taxon>Fungi</taxon>
        <taxon>Dikarya</taxon>
        <taxon>Ascomycota</taxon>
        <taxon>Pezizomycotina</taxon>
        <taxon>Eurotiomycetes</taxon>
        <taxon>Eurotiomycetidae</taxon>
        <taxon>Eurotiales</taxon>
        <taxon>Aspergillaceae</taxon>
        <taxon>Aspergillus</taxon>
        <taxon>Aspergillus subgen. Nidulantes</taxon>
    </lineage>
</organism>
<proteinExistence type="inferred from homology"/>
<feature type="chain" id="PRO_0000218523" description="Pre-mRNA-splicing factor spp2">
    <location>
        <begin position="1"/>
        <end position="523"/>
    </location>
</feature>
<feature type="domain" description="G-patch" evidence="2">
    <location>
        <begin position="257"/>
        <end position="309"/>
    </location>
</feature>
<feature type="region of interest" description="Disordered" evidence="3">
    <location>
        <begin position="1"/>
        <end position="165"/>
    </location>
</feature>
<feature type="region of interest" description="Disordered" evidence="3">
    <location>
        <begin position="200"/>
        <end position="230"/>
    </location>
</feature>
<feature type="region of interest" description="Disordered" evidence="3">
    <location>
        <begin position="275"/>
        <end position="300"/>
    </location>
</feature>
<feature type="region of interest" description="Disordered" evidence="3">
    <location>
        <begin position="323"/>
        <end position="347"/>
    </location>
</feature>
<feature type="region of interest" description="Disordered" evidence="3">
    <location>
        <begin position="359"/>
        <end position="523"/>
    </location>
</feature>
<feature type="compositionally biased region" description="Polar residues" evidence="3">
    <location>
        <begin position="12"/>
        <end position="26"/>
    </location>
</feature>
<feature type="compositionally biased region" description="Basic residues" evidence="3">
    <location>
        <begin position="41"/>
        <end position="50"/>
    </location>
</feature>
<feature type="compositionally biased region" description="Polar residues" evidence="3">
    <location>
        <begin position="67"/>
        <end position="79"/>
    </location>
</feature>
<feature type="compositionally biased region" description="Basic and acidic residues" evidence="3">
    <location>
        <begin position="372"/>
        <end position="440"/>
    </location>
</feature>
<feature type="compositionally biased region" description="Basic and acidic residues" evidence="3">
    <location>
        <begin position="447"/>
        <end position="491"/>
    </location>
</feature>
<feature type="compositionally biased region" description="Low complexity" evidence="3">
    <location>
        <begin position="492"/>
        <end position="502"/>
    </location>
</feature>
<feature type="compositionally biased region" description="Basic and acidic residues" evidence="3">
    <location>
        <begin position="505"/>
        <end position="523"/>
    </location>
</feature>
<protein>
    <recommendedName>
        <fullName>Pre-mRNA-splicing factor spp2</fullName>
    </recommendedName>
</protein>
<sequence length="523" mass="58798">MPSSPPPDGGNANKTSIKPVSLSLGSSKKLPIKKPVSSHTLARRPHHNLPYHHDSDSDDNGGDSEPAFQSVTGFDTLTGRTLDASGAEEKKPLTIPVASGNNWRDRPGVIRRSKGKNLLPKEVQALQEAQSKGEVPGDGDAVGPSMQYGLSFAKQPQNDGGDQKMEDAALPAVEAAEKAKPLTEDEIALQALVRESRGEVEGRSDLVIESTRAGEGEAEEDVNEFYDGHNSETRSFRADVAARPESATLEQYNTIPVEEFGAALLRGMGWKEGQAVGKGKYGSADPSRASTPHIPARRPGFLGIGAKDVSNGKAEVELGAWGKAAMRKGSKKAGEATKNGEGNTEGIYMPVLMRNKKTGEMITEEELAAMAKEAKKRDDSEDWKEERDRNSERSERDKDHHRDRDRDRDSRRLEYDDTYRYESRRNGSSRRDRSRSTSDRHSRRRKYEGDDGDRRDDRYYRDRDRERRSDPVRDRDRNRDRKSRYYDDDRNSSWYSSSTASSKQRNRDRDRDRDNDRDSRRRK</sequence>
<keyword id="KW-0507">mRNA processing</keyword>
<keyword id="KW-0508">mRNA splicing</keyword>
<keyword id="KW-0539">Nucleus</keyword>
<keyword id="KW-1185">Reference proteome</keyword>
<keyword id="KW-0747">Spliceosome</keyword>
<reference key="1">
    <citation type="journal article" date="2005" name="Nature">
        <title>Sequencing of Aspergillus nidulans and comparative analysis with A. fumigatus and A. oryzae.</title>
        <authorList>
            <person name="Galagan J.E."/>
            <person name="Calvo S.E."/>
            <person name="Cuomo C."/>
            <person name="Ma L.-J."/>
            <person name="Wortman J.R."/>
            <person name="Batzoglou S."/>
            <person name="Lee S.-I."/>
            <person name="Bastuerkmen M."/>
            <person name="Spevak C.C."/>
            <person name="Clutterbuck J."/>
            <person name="Kapitonov V."/>
            <person name="Jurka J."/>
            <person name="Scazzocchio C."/>
            <person name="Farman M.L."/>
            <person name="Butler J."/>
            <person name="Purcell S."/>
            <person name="Harris S."/>
            <person name="Braus G.H."/>
            <person name="Draht O."/>
            <person name="Busch S."/>
            <person name="D'Enfert C."/>
            <person name="Bouchier C."/>
            <person name="Goldman G.H."/>
            <person name="Bell-Pedersen D."/>
            <person name="Griffiths-Jones S."/>
            <person name="Doonan J.H."/>
            <person name="Yu J."/>
            <person name="Vienken K."/>
            <person name="Pain A."/>
            <person name="Freitag M."/>
            <person name="Selker E.U."/>
            <person name="Archer D.B."/>
            <person name="Penalva M.A."/>
            <person name="Oakley B.R."/>
            <person name="Momany M."/>
            <person name="Tanaka T."/>
            <person name="Kumagai T."/>
            <person name="Asai K."/>
            <person name="Machida M."/>
            <person name="Nierman W.C."/>
            <person name="Denning D.W."/>
            <person name="Caddick M.X."/>
            <person name="Hynes M."/>
            <person name="Paoletti M."/>
            <person name="Fischer R."/>
            <person name="Miller B.L."/>
            <person name="Dyer P.S."/>
            <person name="Sachs M.S."/>
            <person name="Osmani S.A."/>
            <person name="Birren B.W."/>
        </authorList>
    </citation>
    <scope>NUCLEOTIDE SEQUENCE [LARGE SCALE GENOMIC DNA]</scope>
    <source>
        <strain>FGSC A4 / ATCC 38163 / CBS 112.46 / NRRL 194 / M139</strain>
    </source>
</reference>
<reference key="2">
    <citation type="journal article" date="2009" name="Fungal Genet. Biol.">
        <title>The 2008 update of the Aspergillus nidulans genome annotation: a community effort.</title>
        <authorList>
            <person name="Wortman J.R."/>
            <person name="Gilsenan J.M."/>
            <person name="Joardar V."/>
            <person name="Deegan J."/>
            <person name="Clutterbuck J."/>
            <person name="Andersen M.R."/>
            <person name="Archer D."/>
            <person name="Bencina M."/>
            <person name="Braus G."/>
            <person name="Coutinho P."/>
            <person name="von Dohren H."/>
            <person name="Doonan J."/>
            <person name="Driessen A.J."/>
            <person name="Durek P."/>
            <person name="Espeso E."/>
            <person name="Fekete E."/>
            <person name="Flipphi M."/>
            <person name="Estrada C.G."/>
            <person name="Geysens S."/>
            <person name="Goldman G."/>
            <person name="de Groot P.W."/>
            <person name="Hansen K."/>
            <person name="Harris S.D."/>
            <person name="Heinekamp T."/>
            <person name="Helmstaedt K."/>
            <person name="Henrissat B."/>
            <person name="Hofmann G."/>
            <person name="Homan T."/>
            <person name="Horio T."/>
            <person name="Horiuchi H."/>
            <person name="James S."/>
            <person name="Jones M."/>
            <person name="Karaffa L."/>
            <person name="Karanyi Z."/>
            <person name="Kato M."/>
            <person name="Keller N."/>
            <person name="Kelly D.E."/>
            <person name="Kiel J.A."/>
            <person name="Kim J.M."/>
            <person name="van der Klei I.J."/>
            <person name="Klis F.M."/>
            <person name="Kovalchuk A."/>
            <person name="Krasevec N."/>
            <person name="Kubicek C.P."/>
            <person name="Liu B."/>
            <person name="Maccabe A."/>
            <person name="Meyer V."/>
            <person name="Mirabito P."/>
            <person name="Miskei M."/>
            <person name="Mos M."/>
            <person name="Mullins J."/>
            <person name="Nelson D.R."/>
            <person name="Nielsen J."/>
            <person name="Oakley B.R."/>
            <person name="Osmani S.A."/>
            <person name="Pakula T."/>
            <person name="Paszewski A."/>
            <person name="Paulsen I."/>
            <person name="Pilsyk S."/>
            <person name="Pocsi I."/>
            <person name="Punt P.J."/>
            <person name="Ram A.F."/>
            <person name="Ren Q."/>
            <person name="Robellet X."/>
            <person name="Robson G."/>
            <person name="Seiboth B."/>
            <person name="van Solingen P."/>
            <person name="Specht T."/>
            <person name="Sun J."/>
            <person name="Taheri-Talesh N."/>
            <person name="Takeshita N."/>
            <person name="Ussery D."/>
            <person name="vanKuyk P.A."/>
            <person name="Visser H."/>
            <person name="van de Vondervoort P.J."/>
            <person name="de Vries R.P."/>
            <person name="Walton J."/>
            <person name="Xiang X."/>
            <person name="Xiong Y."/>
            <person name="Zeng A.P."/>
            <person name="Brandt B.W."/>
            <person name="Cornell M.J."/>
            <person name="van den Hondel C.A."/>
            <person name="Visser J."/>
            <person name="Oliver S.G."/>
            <person name="Turner G."/>
        </authorList>
    </citation>
    <scope>GENOME REANNOTATION</scope>
    <source>
        <strain>FGSC A4 / ATCC 38163 / CBS 112.46 / NRRL 194 / M139</strain>
    </source>
</reference>
<gene>
    <name type="primary">spp2</name>
    <name type="ORF">AN4461</name>
</gene>
<comment type="function">
    <text evidence="1">Involved in spliceosome maturation and the first step of pre-mRNA splicing.</text>
</comment>
<comment type="subunit">
    <text evidence="1">Associated with the spliceosome.</text>
</comment>
<comment type="subcellular location">
    <subcellularLocation>
        <location evidence="1">Nucleus</location>
    </subcellularLocation>
</comment>
<comment type="similarity">
    <text evidence="4">Belongs to the SPP2 family.</text>
</comment>
<evidence type="ECO:0000250" key="1"/>
<evidence type="ECO:0000255" key="2">
    <source>
        <dbReference type="PROSITE-ProRule" id="PRU00092"/>
    </source>
</evidence>
<evidence type="ECO:0000256" key="3">
    <source>
        <dbReference type="SAM" id="MobiDB-lite"/>
    </source>
</evidence>
<evidence type="ECO:0000305" key="4"/>
<dbReference type="EMBL" id="AACD01000077">
    <property type="protein sequence ID" value="EAA60226.1"/>
    <property type="molecule type" value="Genomic_DNA"/>
</dbReference>
<dbReference type="EMBL" id="BN001303">
    <property type="protein sequence ID" value="CBF77473.1"/>
    <property type="molecule type" value="Genomic_DNA"/>
</dbReference>
<dbReference type="RefSeq" id="XP_662065.1">
    <property type="nucleotide sequence ID" value="XM_656973.1"/>
</dbReference>
<dbReference type="STRING" id="227321.Q5B4R9"/>
<dbReference type="EnsemblFungi" id="CBF77473">
    <property type="protein sequence ID" value="CBF77473"/>
    <property type="gene ID" value="ANIA_04461"/>
</dbReference>
<dbReference type="KEGG" id="ani:ANIA_04461"/>
<dbReference type="VEuPathDB" id="FungiDB:AN4461"/>
<dbReference type="eggNOG" id="ENOG502RZY8">
    <property type="taxonomic scope" value="Eukaryota"/>
</dbReference>
<dbReference type="HOGENOM" id="CLU_033338_0_1_1"/>
<dbReference type="InParanoid" id="Q5B4R9"/>
<dbReference type="OMA" id="AWGKSAM"/>
<dbReference type="OrthoDB" id="5577072at2759"/>
<dbReference type="Proteomes" id="UP000000560">
    <property type="component" value="Chromosome III"/>
</dbReference>
<dbReference type="GO" id="GO:0005681">
    <property type="term" value="C:spliceosomal complex"/>
    <property type="evidence" value="ECO:0000318"/>
    <property type="project" value="GO_Central"/>
</dbReference>
<dbReference type="GO" id="GO:0003676">
    <property type="term" value="F:nucleic acid binding"/>
    <property type="evidence" value="ECO:0007669"/>
    <property type="project" value="InterPro"/>
</dbReference>
<dbReference type="GO" id="GO:0000398">
    <property type="term" value="P:mRNA splicing, via spliceosome"/>
    <property type="evidence" value="ECO:0000318"/>
    <property type="project" value="GO_Central"/>
</dbReference>
<dbReference type="InterPro" id="IPR000467">
    <property type="entry name" value="G_patch_dom"/>
</dbReference>
<dbReference type="InterPro" id="IPR045166">
    <property type="entry name" value="Spp2-like"/>
</dbReference>
<dbReference type="InterPro" id="IPR026822">
    <property type="entry name" value="Spp2/MOS2_G-patch"/>
</dbReference>
<dbReference type="PANTHER" id="PTHR15818">
    <property type="entry name" value="G PATCH AND KOW-CONTAINING"/>
    <property type="match status" value="1"/>
</dbReference>
<dbReference type="PANTHER" id="PTHR15818:SF2">
    <property type="entry name" value="G-PATCH DOMAIN AND KOW MOTIFS-CONTAINING PROTEIN"/>
    <property type="match status" value="1"/>
</dbReference>
<dbReference type="Pfam" id="PF12656">
    <property type="entry name" value="G-patch_2"/>
    <property type="match status" value="1"/>
</dbReference>
<dbReference type="SMART" id="SM00443">
    <property type="entry name" value="G_patch"/>
    <property type="match status" value="1"/>
</dbReference>
<dbReference type="PROSITE" id="PS50174">
    <property type="entry name" value="G_PATCH"/>
    <property type="match status" value="1"/>
</dbReference>